<comment type="function">
    <text evidence="1">Catalyzes the attachment of glutamate to tRNA(Glu) in a two-step reaction: glutamate is first activated by ATP to form Glu-AMP and then transferred to the acceptor end of tRNA(Glu).</text>
</comment>
<comment type="catalytic activity">
    <reaction evidence="1">
        <text>tRNA(Glu) + L-glutamate + ATP = L-glutamyl-tRNA(Glu) + AMP + diphosphate</text>
        <dbReference type="Rhea" id="RHEA:23540"/>
        <dbReference type="Rhea" id="RHEA-COMP:9663"/>
        <dbReference type="Rhea" id="RHEA-COMP:9680"/>
        <dbReference type="ChEBI" id="CHEBI:29985"/>
        <dbReference type="ChEBI" id="CHEBI:30616"/>
        <dbReference type="ChEBI" id="CHEBI:33019"/>
        <dbReference type="ChEBI" id="CHEBI:78442"/>
        <dbReference type="ChEBI" id="CHEBI:78520"/>
        <dbReference type="ChEBI" id="CHEBI:456215"/>
        <dbReference type="EC" id="6.1.1.17"/>
    </reaction>
</comment>
<comment type="subunit">
    <text evidence="1">Monomer.</text>
</comment>
<comment type="subcellular location">
    <subcellularLocation>
        <location evidence="1">Cytoplasm</location>
    </subcellularLocation>
</comment>
<comment type="similarity">
    <text evidence="1">Belongs to the class-I aminoacyl-tRNA synthetase family. Glutamate--tRNA ligase type 1 subfamily.</text>
</comment>
<sequence>MRDPRVRVRFCPSPTGAPHLGLVRTALFNWVFARKHGGGFIFRIEDTDATRNREESCSQLIDTLKWLGLDWDEGPDKGGQFGPYYQSQRGDIYQEVLDKLLAADLAYESFSTKEEIEKRNLEAGRPIQLGYDNYDRTLSEQTKAAMREAGRTPIIRLRMDDENIAFEDLVKGEVVFTDPIPDFALTRASGEPLYTLVNPVDDAFMKITHVLRGEDLLSSTPRQIALYKALITIGITDYVPFFGHLPIVMGEGNRKLSKRNPESDFYFYKARGFIREGLLNYLSLLGWSISNSRDTFSLSEMIHAFDVRDVRGNPARFDYKKCLAINAYHLRELNVEDFFLRLVPFVEEMLGIPLSFEQKNSLRAICPFVQGRVQLLTEAAEMVRFLLVDNISVDFAVTDKEIDVLRHCLALLNLLDTWESAQIASCIKQAIEQFDLQPKRIFSILRLAITGRRVSPPLFESMQILGRSASLNRVETFVTN</sequence>
<keyword id="KW-0030">Aminoacyl-tRNA synthetase</keyword>
<keyword id="KW-0067">ATP-binding</keyword>
<keyword id="KW-0963">Cytoplasm</keyword>
<keyword id="KW-0436">Ligase</keyword>
<keyword id="KW-0547">Nucleotide-binding</keyword>
<keyword id="KW-0648">Protein biosynthesis</keyword>
<keyword id="KW-1185">Reference proteome</keyword>
<organism>
    <name type="scientific">Tropheryma whipplei (strain Twist)</name>
    <name type="common">Whipple's bacillus</name>
    <dbReference type="NCBI Taxonomy" id="203267"/>
    <lineage>
        <taxon>Bacteria</taxon>
        <taxon>Bacillati</taxon>
        <taxon>Actinomycetota</taxon>
        <taxon>Actinomycetes</taxon>
        <taxon>Micrococcales</taxon>
        <taxon>Tropherymataceae</taxon>
        <taxon>Tropheryma</taxon>
    </lineage>
</organism>
<evidence type="ECO:0000255" key="1">
    <source>
        <dbReference type="HAMAP-Rule" id="MF_00022"/>
    </source>
</evidence>
<gene>
    <name evidence="1" type="primary">gltX</name>
    <name type="synonym">gltS</name>
    <name type="ordered locus">TWT_209</name>
</gene>
<name>SYE_TROWT</name>
<protein>
    <recommendedName>
        <fullName evidence="1">Glutamate--tRNA ligase</fullName>
        <ecNumber evidence="1">6.1.1.17</ecNumber>
    </recommendedName>
    <alternativeName>
        <fullName evidence="1">Glutamyl-tRNA synthetase</fullName>
        <shortName evidence="1">GluRS</shortName>
    </alternativeName>
</protein>
<dbReference type="EC" id="6.1.1.17" evidence="1"/>
<dbReference type="EMBL" id="AE014184">
    <property type="protein sequence ID" value="AAO44306.1"/>
    <property type="molecule type" value="Genomic_DNA"/>
</dbReference>
<dbReference type="RefSeq" id="WP_011096509.1">
    <property type="nucleotide sequence ID" value="NC_004572.3"/>
</dbReference>
<dbReference type="SMR" id="Q83GP4"/>
<dbReference type="STRING" id="203267.TWT_209"/>
<dbReference type="GeneID" id="67388342"/>
<dbReference type="KEGG" id="twh:TWT_209"/>
<dbReference type="eggNOG" id="COG0008">
    <property type="taxonomic scope" value="Bacteria"/>
</dbReference>
<dbReference type="HOGENOM" id="CLU_015768_6_3_11"/>
<dbReference type="OrthoDB" id="9807503at2"/>
<dbReference type="Proteomes" id="UP000002200">
    <property type="component" value="Chromosome"/>
</dbReference>
<dbReference type="GO" id="GO:0005829">
    <property type="term" value="C:cytosol"/>
    <property type="evidence" value="ECO:0007669"/>
    <property type="project" value="TreeGrafter"/>
</dbReference>
<dbReference type="GO" id="GO:0005524">
    <property type="term" value="F:ATP binding"/>
    <property type="evidence" value="ECO:0007669"/>
    <property type="project" value="UniProtKB-UniRule"/>
</dbReference>
<dbReference type="GO" id="GO:0004818">
    <property type="term" value="F:glutamate-tRNA ligase activity"/>
    <property type="evidence" value="ECO:0007669"/>
    <property type="project" value="UniProtKB-UniRule"/>
</dbReference>
<dbReference type="GO" id="GO:0000049">
    <property type="term" value="F:tRNA binding"/>
    <property type="evidence" value="ECO:0007669"/>
    <property type="project" value="InterPro"/>
</dbReference>
<dbReference type="GO" id="GO:0008270">
    <property type="term" value="F:zinc ion binding"/>
    <property type="evidence" value="ECO:0007669"/>
    <property type="project" value="InterPro"/>
</dbReference>
<dbReference type="GO" id="GO:0006424">
    <property type="term" value="P:glutamyl-tRNA aminoacylation"/>
    <property type="evidence" value="ECO:0007669"/>
    <property type="project" value="UniProtKB-UniRule"/>
</dbReference>
<dbReference type="CDD" id="cd00808">
    <property type="entry name" value="GluRS_core"/>
    <property type="match status" value="1"/>
</dbReference>
<dbReference type="Gene3D" id="1.10.10.350">
    <property type="match status" value="1"/>
</dbReference>
<dbReference type="Gene3D" id="1.10.8.70">
    <property type="entry name" value="Glutamate-tRNA synthetase, class I, anticodon-binding domain 1"/>
    <property type="match status" value="1"/>
</dbReference>
<dbReference type="Gene3D" id="1.10.1160.10">
    <property type="entry name" value="Glutamyl-trna Synthetase, Domain 2"/>
    <property type="match status" value="1"/>
</dbReference>
<dbReference type="Gene3D" id="3.90.800.10">
    <property type="entry name" value="Glutamyl-tRNA Synthetase, Domain 3"/>
    <property type="match status" value="1"/>
</dbReference>
<dbReference type="Gene3D" id="3.40.50.620">
    <property type="entry name" value="HUPs"/>
    <property type="match status" value="1"/>
</dbReference>
<dbReference type="HAMAP" id="MF_00022">
    <property type="entry name" value="Glu_tRNA_synth_type1"/>
    <property type="match status" value="1"/>
</dbReference>
<dbReference type="InterPro" id="IPR045462">
    <property type="entry name" value="aa-tRNA-synth_I_cd-bd"/>
</dbReference>
<dbReference type="InterPro" id="IPR020751">
    <property type="entry name" value="aa-tRNA-synth_I_codon-bd_sub2"/>
</dbReference>
<dbReference type="InterPro" id="IPR008925">
    <property type="entry name" value="aa_tRNA-synth_I_cd-bd_sf"/>
</dbReference>
<dbReference type="InterPro" id="IPR004527">
    <property type="entry name" value="Glu-tRNA-ligase_bac/mito"/>
</dbReference>
<dbReference type="InterPro" id="IPR020752">
    <property type="entry name" value="Glu-tRNA-synth_I_codon-bd_sub1"/>
</dbReference>
<dbReference type="InterPro" id="IPR000924">
    <property type="entry name" value="Glu/Gln-tRNA-synth"/>
</dbReference>
<dbReference type="InterPro" id="IPR020058">
    <property type="entry name" value="Glu/Gln-tRNA-synth_Ib_cat-dom"/>
</dbReference>
<dbReference type="InterPro" id="IPR020061">
    <property type="entry name" value="Glu_tRNA_lig_a-bdl"/>
</dbReference>
<dbReference type="InterPro" id="IPR049940">
    <property type="entry name" value="GluQ/Sye"/>
</dbReference>
<dbReference type="InterPro" id="IPR033910">
    <property type="entry name" value="GluRS_core"/>
</dbReference>
<dbReference type="InterPro" id="IPR014729">
    <property type="entry name" value="Rossmann-like_a/b/a_fold"/>
</dbReference>
<dbReference type="NCBIfam" id="TIGR00464">
    <property type="entry name" value="gltX_bact"/>
    <property type="match status" value="1"/>
</dbReference>
<dbReference type="PANTHER" id="PTHR43311">
    <property type="entry name" value="GLUTAMATE--TRNA LIGASE"/>
    <property type="match status" value="1"/>
</dbReference>
<dbReference type="PANTHER" id="PTHR43311:SF2">
    <property type="entry name" value="GLUTAMATE--TRNA LIGASE, MITOCHONDRIAL-RELATED"/>
    <property type="match status" value="1"/>
</dbReference>
<dbReference type="Pfam" id="PF19269">
    <property type="entry name" value="Anticodon_2"/>
    <property type="match status" value="1"/>
</dbReference>
<dbReference type="Pfam" id="PF00749">
    <property type="entry name" value="tRNA-synt_1c"/>
    <property type="match status" value="1"/>
</dbReference>
<dbReference type="PRINTS" id="PR00987">
    <property type="entry name" value="TRNASYNTHGLU"/>
</dbReference>
<dbReference type="SUPFAM" id="SSF48163">
    <property type="entry name" value="An anticodon-binding domain of class I aminoacyl-tRNA synthetases"/>
    <property type="match status" value="1"/>
</dbReference>
<dbReference type="SUPFAM" id="SSF52374">
    <property type="entry name" value="Nucleotidylyl transferase"/>
    <property type="match status" value="1"/>
</dbReference>
<feature type="chain" id="PRO_0000119689" description="Glutamate--tRNA ligase">
    <location>
        <begin position="1"/>
        <end position="480"/>
    </location>
</feature>
<feature type="short sequence motif" description="'HIGH' region" evidence="1">
    <location>
        <begin position="12"/>
        <end position="22"/>
    </location>
</feature>
<feature type="short sequence motif" description="'KMSKS' region" evidence="1">
    <location>
        <begin position="255"/>
        <end position="259"/>
    </location>
</feature>
<feature type="binding site" evidence="1">
    <location>
        <position position="258"/>
    </location>
    <ligand>
        <name>ATP</name>
        <dbReference type="ChEBI" id="CHEBI:30616"/>
    </ligand>
</feature>
<reference key="1">
    <citation type="journal article" date="2003" name="Genome Res.">
        <title>Tropheryma whipplei twist: a human pathogenic Actinobacteria with a reduced genome.</title>
        <authorList>
            <person name="Raoult D."/>
            <person name="Ogata H."/>
            <person name="Audic S."/>
            <person name="Robert C."/>
            <person name="Suhre K."/>
            <person name="Drancourt M."/>
            <person name="Claverie J.-M."/>
        </authorList>
    </citation>
    <scope>NUCLEOTIDE SEQUENCE [LARGE SCALE GENOMIC DNA]</scope>
    <source>
        <strain>Twist</strain>
    </source>
</reference>
<proteinExistence type="inferred from homology"/>
<accession>Q83GP4</accession>